<dbReference type="EC" id="7.1.1.-" evidence="1"/>
<dbReference type="EMBL" id="CP000473">
    <property type="protein sequence ID" value="ABJ86638.1"/>
    <property type="molecule type" value="Genomic_DNA"/>
</dbReference>
<dbReference type="SMR" id="Q01UN2"/>
<dbReference type="FunCoup" id="Q01UN2">
    <property type="interactions" value="246"/>
</dbReference>
<dbReference type="STRING" id="234267.Acid_5691"/>
<dbReference type="KEGG" id="sus:Acid_5691"/>
<dbReference type="eggNOG" id="COG1005">
    <property type="taxonomic scope" value="Bacteria"/>
</dbReference>
<dbReference type="HOGENOM" id="CLU_015134_0_1_0"/>
<dbReference type="InParanoid" id="Q01UN2"/>
<dbReference type="OrthoDB" id="9803734at2"/>
<dbReference type="GO" id="GO:0005886">
    <property type="term" value="C:plasma membrane"/>
    <property type="evidence" value="ECO:0007669"/>
    <property type="project" value="UniProtKB-SubCell"/>
</dbReference>
<dbReference type="GO" id="GO:0003954">
    <property type="term" value="F:NADH dehydrogenase activity"/>
    <property type="evidence" value="ECO:0007669"/>
    <property type="project" value="TreeGrafter"/>
</dbReference>
<dbReference type="GO" id="GO:0016655">
    <property type="term" value="F:oxidoreductase activity, acting on NAD(P)H, quinone or similar compound as acceptor"/>
    <property type="evidence" value="ECO:0007669"/>
    <property type="project" value="UniProtKB-UniRule"/>
</dbReference>
<dbReference type="GO" id="GO:0048038">
    <property type="term" value="F:quinone binding"/>
    <property type="evidence" value="ECO:0007669"/>
    <property type="project" value="UniProtKB-KW"/>
</dbReference>
<dbReference type="GO" id="GO:0009060">
    <property type="term" value="P:aerobic respiration"/>
    <property type="evidence" value="ECO:0007669"/>
    <property type="project" value="TreeGrafter"/>
</dbReference>
<dbReference type="HAMAP" id="MF_01350">
    <property type="entry name" value="NDH1_NuoH"/>
    <property type="match status" value="1"/>
</dbReference>
<dbReference type="InterPro" id="IPR001694">
    <property type="entry name" value="NADH_UbQ_OxRdtase_su1/FPO"/>
</dbReference>
<dbReference type="InterPro" id="IPR018086">
    <property type="entry name" value="NADH_UbQ_OxRdtase_su1_CS"/>
</dbReference>
<dbReference type="PANTHER" id="PTHR11432">
    <property type="entry name" value="NADH DEHYDROGENASE SUBUNIT 1"/>
    <property type="match status" value="1"/>
</dbReference>
<dbReference type="PANTHER" id="PTHR11432:SF3">
    <property type="entry name" value="NADH-UBIQUINONE OXIDOREDUCTASE CHAIN 1"/>
    <property type="match status" value="1"/>
</dbReference>
<dbReference type="Pfam" id="PF00146">
    <property type="entry name" value="NADHdh"/>
    <property type="match status" value="1"/>
</dbReference>
<dbReference type="PROSITE" id="PS00667">
    <property type="entry name" value="COMPLEX1_ND1_1"/>
    <property type="match status" value="1"/>
</dbReference>
<dbReference type="PROSITE" id="PS00668">
    <property type="entry name" value="COMPLEX1_ND1_2"/>
    <property type="match status" value="1"/>
</dbReference>
<evidence type="ECO:0000255" key="1">
    <source>
        <dbReference type="HAMAP-Rule" id="MF_01350"/>
    </source>
</evidence>
<feature type="chain" id="PRO_0000299952" description="NADH-quinone oxidoreductase subunit H 2">
    <location>
        <begin position="1"/>
        <end position="393"/>
    </location>
</feature>
<feature type="transmembrane region" description="Helical" evidence="1">
    <location>
        <begin position="13"/>
        <end position="33"/>
    </location>
</feature>
<feature type="transmembrane region" description="Helical" evidence="1">
    <location>
        <begin position="79"/>
        <end position="99"/>
    </location>
</feature>
<feature type="transmembrane region" description="Helical" evidence="1">
    <location>
        <begin position="112"/>
        <end position="132"/>
    </location>
</feature>
<feature type="transmembrane region" description="Helical" evidence="1">
    <location>
        <begin position="158"/>
        <end position="178"/>
    </location>
</feature>
<feature type="transmembrane region" description="Helical" evidence="1">
    <location>
        <begin position="186"/>
        <end position="206"/>
    </location>
</feature>
<feature type="transmembrane region" description="Helical" evidence="1">
    <location>
        <begin position="240"/>
        <end position="260"/>
    </location>
</feature>
<feature type="transmembrane region" description="Helical" evidence="1">
    <location>
        <begin position="278"/>
        <end position="298"/>
    </location>
</feature>
<feature type="transmembrane region" description="Helical" evidence="1">
    <location>
        <begin position="309"/>
        <end position="329"/>
    </location>
</feature>
<feature type="transmembrane region" description="Helical" evidence="1">
    <location>
        <begin position="333"/>
        <end position="353"/>
    </location>
</feature>
<feature type="transmembrane region" description="Helical" evidence="1">
    <location>
        <begin position="368"/>
        <end position="388"/>
    </location>
</feature>
<accession>Q01UN2</accession>
<gene>
    <name evidence="1" type="primary">nuoH2</name>
    <name type="ordered locus">Acid_5691</name>
</gene>
<reference key="1">
    <citation type="journal article" date="2009" name="Appl. Environ. Microbiol.">
        <title>Three genomes from the phylum Acidobacteria provide insight into the lifestyles of these microorganisms in soils.</title>
        <authorList>
            <person name="Ward N.L."/>
            <person name="Challacombe J.F."/>
            <person name="Janssen P.H."/>
            <person name="Henrissat B."/>
            <person name="Coutinho P.M."/>
            <person name="Wu M."/>
            <person name="Xie G."/>
            <person name="Haft D.H."/>
            <person name="Sait M."/>
            <person name="Badger J."/>
            <person name="Barabote R.D."/>
            <person name="Bradley B."/>
            <person name="Brettin T.S."/>
            <person name="Brinkac L.M."/>
            <person name="Bruce D."/>
            <person name="Creasy T."/>
            <person name="Daugherty S.C."/>
            <person name="Davidsen T.M."/>
            <person name="DeBoy R.T."/>
            <person name="Detter J.C."/>
            <person name="Dodson R.J."/>
            <person name="Durkin A.S."/>
            <person name="Ganapathy A."/>
            <person name="Gwinn-Giglio M."/>
            <person name="Han C.S."/>
            <person name="Khouri H."/>
            <person name="Kiss H."/>
            <person name="Kothari S.P."/>
            <person name="Madupu R."/>
            <person name="Nelson K.E."/>
            <person name="Nelson W.C."/>
            <person name="Paulsen I."/>
            <person name="Penn K."/>
            <person name="Ren Q."/>
            <person name="Rosovitz M.J."/>
            <person name="Selengut J.D."/>
            <person name="Shrivastava S."/>
            <person name="Sullivan S.A."/>
            <person name="Tapia R."/>
            <person name="Thompson L.S."/>
            <person name="Watkins K.L."/>
            <person name="Yang Q."/>
            <person name="Yu C."/>
            <person name="Zafar N."/>
            <person name="Zhou L."/>
            <person name="Kuske C.R."/>
        </authorList>
    </citation>
    <scope>NUCLEOTIDE SEQUENCE [LARGE SCALE GENOMIC DNA]</scope>
    <source>
        <strain>Ellin6076</strain>
    </source>
</reference>
<proteinExistence type="inferred from homology"/>
<organism>
    <name type="scientific">Solibacter usitatus (strain Ellin6076)</name>
    <dbReference type="NCBI Taxonomy" id="234267"/>
    <lineage>
        <taxon>Bacteria</taxon>
        <taxon>Pseudomonadati</taxon>
        <taxon>Acidobacteriota</taxon>
        <taxon>Terriglobia</taxon>
        <taxon>Bryobacterales</taxon>
        <taxon>Solibacteraceae</taxon>
        <taxon>Candidatus Solibacter</taxon>
    </lineage>
</organism>
<comment type="function">
    <text evidence="1">NDH-1 shuttles electrons from NADH, via FMN and iron-sulfur (Fe-S) centers, to quinones in the respiratory chain. The immediate electron acceptor for the enzyme in this species is believed to be ubiquinone. Couples the redox reaction to proton translocation (for every two electrons transferred, four hydrogen ions are translocated across the cytoplasmic membrane), and thus conserves the redox energy in a proton gradient. This subunit may bind ubiquinone.</text>
</comment>
<comment type="catalytic activity">
    <reaction evidence="1">
        <text>a quinone + NADH + 5 H(+)(in) = a quinol + NAD(+) + 4 H(+)(out)</text>
        <dbReference type="Rhea" id="RHEA:57888"/>
        <dbReference type="ChEBI" id="CHEBI:15378"/>
        <dbReference type="ChEBI" id="CHEBI:24646"/>
        <dbReference type="ChEBI" id="CHEBI:57540"/>
        <dbReference type="ChEBI" id="CHEBI:57945"/>
        <dbReference type="ChEBI" id="CHEBI:132124"/>
    </reaction>
</comment>
<comment type="subunit">
    <text evidence="1">NDH-1 is composed of 14 different subunits. Subunits NuoA, H, J, K, L, M, N constitute the membrane sector of the complex.</text>
</comment>
<comment type="subcellular location">
    <subcellularLocation>
        <location evidence="1">Cell inner membrane</location>
        <topology evidence="1">Multi-pass membrane protein</topology>
    </subcellularLocation>
</comment>
<comment type="similarity">
    <text evidence="1">Belongs to the complex I subunit 1 family.</text>
</comment>
<protein>
    <recommendedName>
        <fullName evidence="1">NADH-quinone oxidoreductase subunit H 2</fullName>
        <ecNumber evidence="1">7.1.1.-</ecNumber>
    </recommendedName>
    <alternativeName>
        <fullName evidence="1">NADH dehydrogenase I subunit H 2</fullName>
    </alternativeName>
    <alternativeName>
        <fullName evidence="1">NDH-1 subunit H 2</fullName>
    </alternativeName>
</protein>
<name>NUOH2_SOLUE</name>
<sequence length="393" mass="42911">METVLNHPLFMPVLVTLVIIAAFPLVAGYIVLVERKVLADFQVRLGPMRCGPHGLLQPIADALKLLLKEDIIPTDSDKAIFWFAPCISTITGLVAFAVIPFARKIYVADVNVGLLVISATSAVGILGIILGGWSSNSHYSLLGALRSAAQLVSYEVALAFALLSGVMVAGTLSMQGIVQSQADRGVWGIFANYGFMVVPFVLYIIAATAETNRAPFDLPEAESELVAGFHTEYSGFRWALYFLAEYANIFVISSVAVTLFWGGWLRPFSSVAWLEKPLNYGVPVILFVGSGLLTFTLIRKVVDPMQQKVLLGVVVLLVLIGAIMAIPMVNDAMIGLFWFLVKVSVIIYTMIWFRGTFPRYRYDQLMNIGWKIAIPVGMASVMVNAVLGMLGKH</sequence>
<keyword id="KW-0997">Cell inner membrane</keyword>
<keyword id="KW-1003">Cell membrane</keyword>
<keyword id="KW-0472">Membrane</keyword>
<keyword id="KW-0520">NAD</keyword>
<keyword id="KW-0874">Quinone</keyword>
<keyword id="KW-1278">Translocase</keyword>
<keyword id="KW-0812">Transmembrane</keyword>
<keyword id="KW-1133">Transmembrane helix</keyword>
<keyword id="KW-0830">Ubiquinone</keyword>